<protein>
    <recommendedName>
        <fullName>Exportin-T</fullName>
    </recommendedName>
    <alternativeName>
        <fullName>Exportin(tRNA)</fullName>
    </alternativeName>
    <alternativeName>
        <fullName>Karyopherin-beta</fullName>
    </alternativeName>
    <alternativeName>
        <fullName>tRNA exportin</fullName>
    </alternativeName>
</protein>
<comment type="function">
    <text evidence="1">tRNA nucleus export receptor which facilitates tRNA translocation across the nuclear pore complex. Involved in pre-tRNA splicing, probably by affecting the interaction of pre-tRNA with splicing endonuclease (By similarity).</text>
</comment>
<comment type="subcellular location">
    <subcellularLocation>
        <location evidence="1">Nucleus</location>
    </subcellularLocation>
    <subcellularLocation>
        <location evidence="1">Cytoplasm</location>
    </subcellularLocation>
    <text evidence="1">Shuttles between the nucleus and the cytoplasm.</text>
</comment>
<comment type="similarity">
    <text evidence="2">Belongs to the exportin family.</text>
</comment>
<evidence type="ECO:0000250" key="1"/>
<evidence type="ECO:0000305" key="2"/>
<gene>
    <name type="primary">LOS1</name>
    <name type="ordered locus">YALI0E04576g</name>
</gene>
<keyword id="KW-0963">Cytoplasm</keyword>
<keyword id="KW-0539">Nucleus</keyword>
<keyword id="KW-1185">Reference proteome</keyword>
<keyword id="KW-0694">RNA-binding</keyword>
<keyword id="KW-0813">Transport</keyword>
<keyword id="KW-0819">tRNA processing</keyword>
<keyword id="KW-0820">tRNA-binding</keyword>
<proteinExistence type="inferred from homology"/>
<organism>
    <name type="scientific">Yarrowia lipolytica (strain CLIB 122 / E 150)</name>
    <name type="common">Yeast</name>
    <name type="synonym">Candida lipolytica</name>
    <dbReference type="NCBI Taxonomy" id="284591"/>
    <lineage>
        <taxon>Eukaryota</taxon>
        <taxon>Fungi</taxon>
        <taxon>Dikarya</taxon>
        <taxon>Ascomycota</taxon>
        <taxon>Saccharomycotina</taxon>
        <taxon>Dipodascomycetes</taxon>
        <taxon>Dipodascales</taxon>
        <taxon>Dipodascales incertae sedis</taxon>
        <taxon>Yarrowia</taxon>
    </lineage>
</organism>
<reference key="1">
    <citation type="journal article" date="2004" name="Nature">
        <title>Genome evolution in yeasts.</title>
        <authorList>
            <person name="Dujon B."/>
            <person name="Sherman D."/>
            <person name="Fischer G."/>
            <person name="Durrens P."/>
            <person name="Casaregola S."/>
            <person name="Lafontaine I."/>
            <person name="de Montigny J."/>
            <person name="Marck C."/>
            <person name="Neuveglise C."/>
            <person name="Talla E."/>
            <person name="Goffard N."/>
            <person name="Frangeul L."/>
            <person name="Aigle M."/>
            <person name="Anthouard V."/>
            <person name="Babour A."/>
            <person name="Barbe V."/>
            <person name="Barnay S."/>
            <person name="Blanchin S."/>
            <person name="Beckerich J.-M."/>
            <person name="Beyne E."/>
            <person name="Bleykasten C."/>
            <person name="Boisrame A."/>
            <person name="Boyer J."/>
            <person name="Cattolico L."/>
            <person name="Confanioleri F."/>
            <person name="de Daruvar A."/>
            <person name="Despons L."/>
            <person name="Fabre E."/>
            <person name="Fairhead C."/>
            <person name="Ferry-Dumazet H."/>
            <person name="Groppi A."/>
            <person name="Hantraye F."/>
            <person name="Hennequin C."/>
            <person name="Jauniaux N."/>
            <person name="Joyet P."/>
            <person name="Kachouri R."/>
            <person name="Kerrest A."/>
            <person name="Koszul R."/>
            <person name="Lemaire M."/>
            <person name="Lesur I."/>
            <person name="Ma L."/>
            <person name="Muller H."/>
            <person name="Nicaud J.-M."/>
            <person name="Nikolski M."/>
            <person name="Oztas S."/>
            <person name="Ozier-Kalogeropoulos O."/>
            <person name="Pellenz S."/>
            <person name="Potier S."/>
            <person name="Richard G.-F."/>
            <person name="Straub M.-L."/>
            <person name="Suleau A."/>
            <person name="Swennen D."/>
            <person name="Tekaia F."/>
            <person name="Wesolowski-Louvel M."/>
            <person name="Westhof E."/>
            <person name="Wirth B."/>
            <person name="Zeniou-Meyer M."/>
            <person name="Zivanovic Y."/>
            <person name="Bolotin-Fukuhara M."/>
            <person name="Thierry A."/>
            <person name="Bouchier C."/>
            <person name="Caudron B."/>
            <person name="Scarpelli C."/>
            <person name="Gaillardin C."/>
            <person name="Weissenbach J."/>
            <person name="Wincker P."/>
            <person name="Souciet J.-L."/>
        </authorList>
    </citation>
    <scope>NUCLEOTIDE SEQUENCE [LARGE SCALE GENOMIC DNA]</scope>
    <source>
        <strain>CLIB 122 / E 150</strain>
    </source>
</reference>
<name>XPOT_YARLI</name>
<dbReference type="EMBL" id="CR382131">
    <property type="protein sequence ID" value="CAG79128.1"/>
    <property type="molecule type" value="Genomic_DNA"/>
</dbReference>
<dbReference type="RefSeq" id="XP_503547.1">
    <property type="nucleotide sequence ID" value="XM_503547.1"/>
</dbReference>
<dbReference type="SMR" id="Q6C715"/>
<dbReference type="FunCoup" id="Q6C715">
    <property type="interactions" value="1074"/>
</dbReference>
<dbReference type="STRING" id="284591.Q6C715"/>
<dbReference type="EnsemblFungi" id="CAG79128">
    <property type="protein sequence ID" value="CAG79128"/>
    <property type="gene ID" value="YALI0_E04576g"/>
</dbReference>
<dbReference type="KEGG" id="yli:2912203"/>
<dbReference type="VEuPathDB" id="FungiDB:YALI0_E04576g"/>
<dbReference type="HOGENOM" id="CLU_004414_0_1_1"/>
<dbReference type="InParanoid" id="Q6C715"/>
<dbReference type="OMA" id="HEMFLFG"/>
<dbReference type="OrthoDB" id="2235at4891"/>
<dbReference type="Proteomes" id="UP000001300">
    <property type="component" value="Chromosome E"/>
</dbReference>
<dbReference type="GO" id="GO:0005737">
    <property type="term" value="C:cytoplasm"/>
    <property type="evidence" value="ECO:0000318"/>
    <property type="project" value="GO_Central"/>
</dbReference>
<dbReference type="GO" id="GO:0016363">
    <property type="term" value="C:nuclear matrix"/>
    <property type="evidence" value="ECO:0000318"/>
    <property type="project" value="GO_Central"/>
</dbReference>
<dbReference type="GO" id="GO:0005643">
    <property type="term" value="C:nuclear pore"/>
    <property type="evidence" value="ECO:0000318"/>
    <property type="project" value="GO_Central"/>
</dbReference>
<dbReference type="GO" id="GO:0031267">
    <property type="term" value="F:small GTPase binding"/>
    <property type="evidence" value="ECO:0007669"/>
    <property type="project" value="InterPro"/>
</dbReference>
<dbReference type="GO" id="GO:0000049">
    <property type="term" value="F:tRNA binding"/>
    <property type="evidence" value="ECO:0000318"/>
    <property type="project" value="GO_Central"/>
</dbReference>
<dbReference type="GO" id="GO:0008033">
    <property type="term" value="P:tRNA processing"/>
    <property type="evidence" value="ECO:0007669"/>
    <property type="project" value="UniProtKB-KW"/>
</dbReference>
<dbReference type="GO" id="GO:0071528">
    <property type="term" value="P:tRNA re-export from nucleus"/>
    <property type="evidence" value="ECO:0000318"/>
    <property type="project" value="GO_Central"/>
</dbReference>
<dbReference type="Gene3D" id="1.25.10.10">
    <property type="entry name" value="Leucine-rich Repeat Variant"/>
    <property type="match status" value="1"/>
</dbReference>
<dbReference type="InterPro" id="IPR011989">
    <property type="entry name" value="ARM-like"/>
</dbReference>
<dbReference type="InterPro" id="IPR016024">
    <property type="entry name" value="ARM-type_fold"/>
</dbReference>
<dbReference type="InterPro" id="IPR013598">
    <property type="entry name" value="Exportin-1/Importin-b-like"/>
</dbReference>
<dbReference type="InterPro" id="IPR045546">
    <property type="entry name" value="Exportin-T_C"/>
</dbReference>
<dbReference type="InterPro" id="IPR040017">
    <property type="entry name" value="XPOT"/>
</dbReference>
<dbReference type="PANTHER" id="PTHR15952:SF11">
    <property type="entry name" value="EXPORTIN-T"/>
    <property type="match status" value="1"/>
</dbReference>
<dbReference type="PANTHER" id="PTHR15952">
    <property type="entry name" value="EXPORTIN-T/LOS1"/>
    <property type="match status" value="1"/>
</dbReference>
<dbReference type="Pfam" id="PF19282">
    <property type="entry name" value="Exportin-T"/>
    <property type="match status" value="2"/>
</dbReference>
<dbReference type="Pfam" id="PF08389">
    <property type="entry name" value="Xpo1"/>
    <property type="match status" value="1"/>
</dbReference>
<dbReference type="SUPFAM" id="SSF48371">
    <property type="entry name" value="ARM repeat"/>
    <property type="match status" value="1"/>
</dbReference>
<sequence length="1025" mass="114999">MEDQIEQAVDIAIQGVGDPAVRQQALDFCNQVKASDEGWQMCLAMFAGDRKRSDAARYFSLQVIDEALGRLNREQLVYVRDHLFAYVRMGSGLSQGQANVNVGQAVSFADDPVHMKNKLGETLAYLFIMTYTEIWDTFFYDFERLLESPENQFGNPRAADLYLRVLNDIHREIGDTLIIRDPAVQSRNNDLKDLIRNRDMARLADSWKKILMYYKDQQLEPLATEIVNNALRVIGGWVSWAELTLIAEPEALEAIFNLLSSPKSRIHACDCLSEIVAKKMYPNAKFQLIQSLNLTSIIHTLSQSADIEFDERVAKLANSIGSELIHIVETESQEFSANCEALLLDMFPLLLRYLGNEYDDTSSQVLPSVGSYLQLVRRDSKREKAKINPNRLTKNTADQYENFPADRTFISDQRHAVVRSILEAVMKKCRYLDDQEWEEDEDGEFCELRQRLKNLQDMCASIDNQLFLDDVCPVISQALSLPPTADWRDIELGMFELQTLSEAMRSGALSTVKTGQNESPATQAFNNLFFQMVASDAVAQCPQPAVHLLFMEIVVKHSSLFSQHNTNLLNRVLEFFVSPLGIQNSESTKVQMRSWILFHKFCKSVKPQIGQVAQLLVDSIRPLLVIQTEDDTDSDDESAGSAFNAQLNLFELSGILVSILDEASATNGVEQTLQPIFTAVEKAIGVSPPNAESITLVHHNLVAIGTFAHGLDGSSNKLPDGILQLFKNSAEVVNVALDRIPDTKVREAARTVFTRLVPILGSSILSEISTLIQILLQRCSHAELADFLGFLGHLLHSFRNDEGVYNMLKSLLSPLCQRVFASLEELSASADAGNTDDKVLKVEIQRAYLMFIMQILRDRMGGAIVEDKQLADSIIKSVIHYASDPTDIYTCRSAASCLTKMIQLWGNGELEAASAEESVFDQGQKIDGFEQIVLEFSGLCWQVPASSGFNLQDAQSKILVTELGNIQKHIYLKKGDQFLSYLVEQYFPQIGVPDNAAKDYVEKLKTLENKDFKKYFSAFVNELVK</sequence>
<feature type="chain" id="PRO_0000343109" description="Exportin-T">
    <location>
        <begin position="1"/>
        <end position="1025"/>
    </location>
</feature>
<accession>Q6C715</accession>